<gene>
    <name type="primary">LUL4</name>
    <name type="synonym">RF208</name>
    <name type="ordered locus">At3g06140</name>
    <name type="ORF">F28L1.8</name>
</gene>
<sequence>MGISFSNNNRRRDNNNRRHLHHYPPPPPYYYLDPPPPPPPFPPHYDYNYSNYHLSPPLPPQPQINSCSYGHYHYHPQPPQYFTTAQPNWWGPMMRPAYYCPPQPQTQPPKPYLEQQNAKKVRNDVNVHRDTVRLEVDDLVPGHHLVSFVFDALFDGSFTITFFAKEEPNCTIIPQFPEVYSPTRFHFQKGPGQKFLQPSGTGTDLSFFVLDDLSKPLEEDVYPLVISAETIISPNSISEQSSVHKQVTQAVLEKDNDGSFKVKVVKQILWIEGVRYELRELYGSTTQGAASGLDESGSGTECVICMTEAKDTAVLPCRHLCMCSDCAKELRLQSNKCPICRQPIEELLEIKMNSSDEQH</sequence>
<dbReference type="EC" id="2.3.2.27"/>
<dbReference type="EMBL" id="AC018907">
    <property type="protein sequence ID" value="AAF30307.1"/>
    <property type="status" value="ALT_SEQ"/>
    <property type="molecule type" value="Genomic_DNA"/>
</dbReference>
<dbReference type="EMBL" id="CP002686">
    <property type="protein sequence ID" value="AEE74350.1"/>
    <property type="molecule type" value="Genomic_DNA"/>
</dbReference>
<dbReference type="EMBL" id="BT028998">
    <property type="protein sequence ID" value="ABI93907.1"/>
    <property type="molecule type" value="mRNA"/>
</dbReference>
<dbReference type="EMBL" id="AY088059">
    <property type="protein sequence ID" value="AAM65605.1"/>
    <property type="molecule type" value="mRNA"/>
</dbReference>
<dbReference type="RefSeq" id="NP_566274.1">
    <property type="nucleotide sequence ID" value="NM_111489.4"/>
</dbReference>
<dbReference type="SMR" id="Q8LA32"/>
<dbReference type="FunCoup" id="Q8LA32">
    <property type="interactions" value="1210"/>
</dbReference>
<dbReference type="STRING" id="3702.Q8LA32"/>
<dbReference type="PaxDb" id="3702-AT3G06140.1"/>
<dbReference type="EnsemblPlants" id="AT3G06140.1">
    <property type="protein sequence ID" value="AT3G06140.1"/>
    <property type="gene ID" value="AT3G06140"/>
</dbReference>
<dbReference type="GeneID" id="819787"/>
<dbReference type="Gramene" id="AT3G06140.1">
    <property type="protein sequence ID" value="AT3G06140.1"/>
    <property type="gene ID" value="AT3G06140"/>
</dbReference>
<dbReference type="KEGG" id="ath:AT3G06140"/>
<dbReference type="Araport" id="AT3G06140"/>
<dbReference type="TAIR" id="AT3G06140">
    <property type="gene designation" value="LUL4"/>
</dbReference>
<dbReference type="eggNOG" id="KOG4265">
    <property type="taxonomic scope" value="Eukaryota"/>
</dbReference>
<dbReference type="HOGENOM" id="CLU_016631_0_0_1"/>
<dbReference type="InParanoid" id="Q8LA32"/>
<dbReference type="OMA" id="NGWPAIR"/>
<dbReference type="OrthoDB" id="1711136at2759"/>
<dbReference type="UniPathway" id="UPA00143"/>
<dbReference type="PRO" id="PR:Q8LA32"/>
<dbReference type="Proteomes" id="UP000006548">
    <property type="component" value="Chromosome 3"/>
</dbReference>
<dbReference type="ExpressionAtlas" id="Q8LA32">
    <property type="expression patterns" value="baseline and differential"/>
</dbReference>
<dbReference type="GO" id="GO:0061630">
    <property type="term" value="F:ubiquitin protein ligase activity"/>
    <property type="evidence" value="ECO:0007669"/>
    <property type="project" value="InterPro"/>
</dbReference>
<dbReference type="GO" id="GO:0004842">
    <property type="term" value="F:ubiquitin-protein transferase activity"/>
    <property type="evidence" value="ECO:0000314"/>
    <property type="project" value="TAIR"/>
</dbReference>
<dbReference type="GO" id="GO:0008270">
    <property type="term" value="F:zinc ion binding"/>
    <property type="evidence" value="ECO:0007669"/>
    <property type="project" value="UniProtKB-KW"/>
</dbReference>
<dbReference type="GO" id="GO:0016567">
    <property type="term" value="P:protein ubiquitination"/>
    <property type="evidence" value="ECO:0007669"/>
    <property type="project" value="UniProtKB-UniPathway"/>
</dbReference>
<dbReference type="CDD" id="cd16789">
    <property type="entry name" value="mRING-HC-C3HC5_MGRN1-like"/>
    <property type="match status" value="1"/>
</dbReference>
<dbReference type="FunFam" id="3.30.40.10:FF:000115">
    <property type="entry name" value="probable E3 ubiquitin-protein ligase LOG2"/>
    <property type="match status" value="1"/>
</dbReference>
<dbReference type="Gene3D" id="3.30.40.10">
    <property type="entry name" value="Zinc/RING finger domain, C3HC4 (zinc finger)"/>
    <property type="match status" value="1"/>
</dbReference>
<dbReference type="InterPro" id="IPR045195">
    <property type="entry name" value="LOG2-like_mRING_C3HC5"/>
</dbReference>
<dbReference type="InterPro" id="IPR045194">
    <property type="entry name" value="MGRN1/RNF157-like"/>
</dbReference>
<dbReference type="InterPro" id="IPR001841">
    <property type="entry name" value="Znf_RING"/>
</dbReference>
<dbReference type="InterPro" id="IPR013083">
    <property type="entry name" value="Znf_RING/FYVE/PHD"/>
</dbReference>
<dbReference type="PANTHER" id="PTHR22996:SF4">
    <property type="entry name" value="E3 UBIQUITIN-PROTEIN LIGASE LUL4-RELATED"/>
    <property type="match status" value="1"/>
</dbReference>
<dbReference type="PANTHER" id="PTHR22996">
    <property type="entry name" value="MAHOGUNIN"/>
    <property type="match status" value="1"/>
</dbReference>
<dbReference type="Pfam" id="PF13920">
    <property type="entry name" value="zf-C3HC4_3"/>
    <property type="match status" value="1"/>
</dbReference>
<dbReference type="SMART" id="SM00184">
    <property type="entry name" value="RING"/>
    <property type="match status" value="1"/>
</dbReference>
<dbReference type="SUPFAM" id="SSF57850">
    <property type="entry name" value="RING/U-box"/>
    <property type="match status" value="1"/>
</dbReference>
<dbReference type="PROSITE" id="PS50089">
    <property type="entry name" value="ZF_RING_2"/>
    <property type="match status" value="1"/>
</dbReference>
<reference key="1">
    <citation type="journal article" date="2000" name="Nature">
        <title>Sequence and analysis of chromosome 3 of the plant Arabidopsis thaliana.</title>
        <authorList>
            <person name="Salanoubat M."/>
            <person name="Lemcke K."/>
            <person name="Rieger M."/>
            <person name="Ansorge W."/>
            <person name="Unseld M."/>
            <person name="Fartmann B."/>
            <person name="Valle G."/>
            <person name="Bloecker H."/>
            <person name="Perez-Alonso M."/>
            <person name="Obermaier B."/>
            <person name="Delseny M."/>
            <person name="Boutry M."/>
            <person name="Grivell L.A."/>
            <person name="Mache R."/>
            <person name="Puigdomenech P."/>
            <person name="De Simone V."/>
            <person name="Choisne N."/>
            <person name="Artiguenave F."/>
            <person name="Robert C."/>
            <person name="Brottier P."/>
            <person name="Wincker P."/>
            <person name="Cattolico L."/>
            <person name="Weissenbach J."/>
            <person name="Saurin W."/>
            <person name="Quetier F."/>
            <person name="Schaefer M."/>
            <person name="Mueller-Auer S."/>
            <person name="Gabel C."/>
            <person name="Fuchs M."/>
            <person name="Benes V."/>
            <person name="Wurmbach E."/>
            <person name="Drzonek H."/>
            <person name="Erfle H."/>
            <person name="Jordan N."/>
            <person name="Bangert S."/>
            <person name="Wiedelmann R."/>
            <person name="Kranz H."/>
            <person name="Voss H."/>
            <person name="Holland R."/>
            <person name="Brandt P."/>
            <person name="Nyakatura G."/>
            <person name="Vezzi A."/>
            <person name="D'Angelo M."/>
            <person name="Pallavicini A."/>
            <person name="Toppo S."/>
            <person name="Simionati B."/>
            <person name="Conrad A."/>
            <person name="Hornischer K."/>
            <person name="Kauer G."/>
            <person name="Loehnert T.-H."/>
            <person name="Nordsiek G."/>
            <person name="Reichelt J."/>
            <person name="Scharfe M."/>
            <person name="Schoen O."/>
            <person name="Bargues M."/>
            <person name="Terol J."/>
            <person name="Climent J."/>
            <person name="Navarro P."/>
            <person name="Collado C."/>
            <person name="Perez-Perez A."/>
            <person name="Ottenwaelder B."/>
            <person name="Duchemin D."/>
            <person name="Cooke R."/>
            <person name="Laudie M."/>
            <person name="Berger-Llauro C."/>
            <person name="Purnelle B."/>
            <person name="Masuy D."/>
            <person name="de Haan M."/>
            <person name="Maarse A.C."/>
            <person name="Alcaraz J.-P."/>
            <person name="Cottet A."/>
            <person name="Casacuberta E."/>
            <person name="Monfort A."/>
            <person name="Argiriou A."/>
            <person name="Flores M."/>
            <person name="Liguori R."/>
            <person name="Vitale D."/>
            <person name="Mannhaupt G."/>
            <person name="Haase D."/>
            <person name="Schoof H."/>
            <person name="Rudd S."/>
            <person name="Zaccaria P."/>
            <person name="Mewes H.-W."/>
            <person name="Mayer K.F.X."/>
            <person name="Kaul S."/>
            <person name="Town C.D."/>
            <person name="Koo H.L."/>
            <person name="Tallon L.J."/>
            <person name="Jenkins J."/>
            <person name="Rooney T."/>
            <person name="Rizzo M."/>
            <person name="Walts A."/>
            <person name="Utterback T."/>
            <person name="Fujii C.Y."/>
            <person name="Shea T.P."/>
            <person name="Creasy T.H."/>
            <person name="Haas B."/>
            <person name="Maiti R."/>
            <person name="Wu D."/>
            <person name="Peterson J."/>
            <person name="Van Aken S."/>
            <person name="Pai G."/>
            <person name="Militscher J."/>
            <person name="Sellers P."/>
            <person name="Gill J.E."/>
            <person name="Feldblyum T.V."/>
            <person name="Preuss D."/>
            <person name="Lin X."/>
            <person name="Nierman W.C."/>
            <person name="Salzberg S.L."/>
            <person name="White O."/>
            <person name="Venter J.C."/>
            <person name="Fraser C.M."/>
            <person name="Kaneko T."/>
            <person name="Nakamura Y."/>
            <person name="Sato S."/>
            <person name="Kato T."/>
            <person name="Asamizu E."/>
            <person name="Sasamoto S."/>
            <person name="Kimura T."/>
            <person name="Idesawa K."/>
            <person name="Kawashima K."/>
            <person name="Kishida Y."/>
            <person name="Kiyokawa C."/>
            <person name="Kohara M."/>
            <person name="Matsumoto M."/>
            <person name="Matsuno A."/>
            <person name="Muraki A."/>
            <person name="Nakayama S."/>
            <person name="Nakazaki N."/>
            <person name="Shinpo S."/>
            <person name="Takeuchi C."/>
            <person name="Wada T."/>
            <person name="Watanabe A."/>
            <person name="Yamada M."/>
            <person name="Yasuda M."/>
            <person name="Tabata S."/>
        </authorList>
    </citation>
    <scope>NUCLEOTIDE SEQUENCE [LARGE SCALE GENOMIC DNA]</scope>
    <source>
        <strain>cv. Columbia</strain>
    </source>
</reference>
<reference key="2">
    <citation type="journal article" date="2017" name="Plant J.">
        <title>Araport11: a complete reannotation of the Arabidopsis thaliana reference genome.</title>
        <authorList>
            <person name="Cheng C.Y."/>
            <person name="Krishnakumar V."/>
            <person name="Chan A.P."/>
            <person name="Thibaud-Nissen F."/>
            <person name="Schobel S."/>
            <person name="Town C.D."/>
        </authorList>
    </citation>
    <scope>GENOME REANNOTATION</scope>
    <source>
        <strain>cv. Columbia</strain>
    </source>
</reference>
<reference key="3">
    <citation type="submission" date="2006-09" db="EMBL/GenBank/DDBJ databases">
        <title>Arabidopsis ORF clones.</title>
        <authorList>
            <person name="Bautista V.R."/>
            <person name="Kim C.J."/>
            <person name="Chen H."/>
            <person name="Quinitio C."/>
            <person name="Ecker J.R."/>
        </authorList>
    </citation>
    <scope>NUCLEOTIDE SEQUENCE [LARGE SCALE MRNA]</scope>
    <source>
        <strain>cv. Columbia</strain>
    </source>
</reference>
<reference key="4">
    <citation type="submission" date="2002-03" db="EMBL/GenBank/DDBJ databases">
        <title>Full-length cDNA from Arabidopsis thaliana.</title>
        <authorList>
            <person name="Brover V.V."/>
            <person name="Troukhan M.E."/>
            <person name="Alexandrov N.A."/>
            <person name="Lu Y.-P."/>
            <person name="Flavell R.B."/>
            <person name="Feldmann K.A."/>
        </authorList>
    </citation>
    <scope>NUCLEOTIDE SEQUENCE [LARGE SCALE MRNA]</scope>
</reference>
<reference key="5">
    <citation type="journal article" date="2002" name="Genome Biol.">
        <title>Evaluation and classification of RING-finger domains encoded by the Arabidopsis genome.</title>
        <authorList>
            <person name="Kosarev P."/>
            <person name="Mayer K.F.X."/>
            <person name="Hardtke C.S."/>
        </authorList>
    </citation>
    <scope>GENE FAMILY ORGANIZATION</scope>
</reference>
<reference key="6">
    <citation type="journal article" date="2005" name="Plant Physiol.">
        <title>Functional analysis of the RING-type ubiquitin ligase family of Arabidopsis.</title>
        <authorList>
            <person name="Stone S.L."/>
            <person name="Hauksdottir H."/>
            <person name="Troy A."/>
            <person name="Herschleb J."/>
            <person name="Kraft E."/>
            <person name="Callis J."/>
        </authorList>
    </citation>
    <scope>DOMAIN</scope>
</reference>
<reference key="7">
    <citation type="journal article" date="2012" name="Plant Physiol.">
        <title>The ubiquitin E3 ligase LOSS OF GDU2 is required for GLUTAMINE DUMPER1-induced amino acid secretion in Arabidopsis.</title>
        <authorList>
            <person name="Pratelli R."/>
            <person name="Guerra D.D."/>
            <person name="Yu S."/>
            <person name="Wogulis M."/>
            <person name="Kraft E."/>
            <person name="Frommer W.B."/>
            <person name="Callis J."/>
            <person name="Pilot G."/>
        </authorList>
    </citation>
    <scope>GENE SUBFAMILY</scope>
    <scope>FUNCTION</scope>
</reference>
<organism>
    <name type="scientific">Arabidopsis thaliana</name>
    <name type="common">Mouse-ear cress</name>
    <dbReference type="NCBI Taxonomy" id="3702"/>
    <lineage>
        <taxon>Eukaryota</taxon>
        <taxon>Viridiplantae</taxon>
        <taxon>Streptophyta</taxon>
        <taxon>Embryophyta</taxon>
        <taxon>Tracheophyta</taxon>
        <taxon>Spermatophyta</taxon>
        <taxon>Magnoliopsida</taxon>
        <taxon>eudicotyledons</taxon>
        <taxon>Gunneridae</taxon>
        <taxon>Pentapetalae</taxon>
        <taxon>rosids</taxon>
        <taxon>malvids</taxon>
        <taxon>Brassicales</taxon>
        <taxon>Brassicaceae</taxon>
        <taxon>Camelineae</taxon>
        <taxon>Arabidopsis</taxon>
    </lineage>
</organism>
<keyword id="KW-0449">Lipoprotein</keyword>
<keyword id="KW-0479">Metal-binding</keyword>
<keyword id="KW-0519">Myristate</keyword>
<keyword id="KW-1185">Reference proteome</keyword>
<keyword id="KW-0808">Transferase</keyword>
<keyword id="KW-0833">Ubl conjugation pathway</keyword>
<keyword id="KW-0862">Zinc</keyword>
<keyword id="KW-0863">Zinc-finger</keyword>
<evidence type="ECO:0000250" key="1"/>
<evidence type="ECO:0000255" key="2"/>
<evidence type="ECO:0000255" key="3">
    <source>
        <dbReference type="PROSITE-ProRule" id="PRU00175"/>
    </source>
</evidence>
<evidence type="ECO:0000256" key="4">
    <source>
        <dbReference type="SAM" id="MobiDB-lite"/>
    </source>
</evidence>
<evidence type="ECO:0000269" key="5">
    <source>
    </source>
</evidence>
<evidence type="ECO:0000305" key="6"/>
<accession>Q8LA32</accession>
<accession>Q9M8K4</accession>
<comment type="function">
    <text evidence="5">Acts as an E3 ubiquitin-protein ligase, or as part of E3 complex, which accepts ubiquitin from specific E2 ubiquitin-conjugating enzymes and then transfers it to substrates (in vitro).</text>
</comment>
<comment type="catalytic activity">
    <reaction>
        <text>S-ubiquitinyl-[E2 ubiquitin-conjugating enzyme]-L-cysteine + [acceptor protein]-L-lysine = [E2 ubiquitin-conjugating enzyme]-L-cysteine + N(6)-ubiquitinyl-[acceptor protein]-L-lysine.</text>
        <dbReference type="EC" id="2.3.2.27"/>
    </reaction>
</comment>
<comment type="pathway">
    <text>Protein modification; protein ubiquitination.</text>
</comment>
<comment type="domain">
    <text evidence="1">The RING-type zinc finger domain mediates binding to an E2 ubiquitin-conjugating enzyme.</text>
</comment>
<comment type="similarity">
    <text evidence="6">Belongs to the RING-type zinc finger family. LOG2 subfamily.</text>
</comment>
<comment type="sequence caution" evidence="6">
    <conflict type="erroneous gene model prediction">
        <sequence resource="EMBL-CDS" id="AAF30307"/>
    </conflict>
</comment>
<feature type="initiator methionine" description="Removed" evidence="2">
    <location>
        <position position="1"/>
    </location>
</feature>
<feature type="chain" id="PRO_0000419950" description="Probable E3 ubiquitin-protein ligase LUL4">
    <location>
        <begin position="2"/>
        <end position="359"/>
    </location>
</feature>
<feature type="zinc finger region" description="RING-type" evidence="3">
    <location>
        <begin position="302"/>
        <end position="341"/>
    </location>
</feature>
<feature type="region of interest" description="Disordered" evidence="4">
    <location>
        <begin position="1"/>
        <end position="35"/>
    </location>
</feature>
<feature type="region of interest" description="DAR2 domain">
    <location>
        <begin position="148"/>
        <end position="267"/>
    </location>
</feature>
<feature type="compositionally biased region" description="Pro residues" evidence="4">
    <location>
        <begin position="23"/>
        <end position="35"/>
    </location>
</feature>
<feature type="lipid moiety-binding region" description="N-myristoyl glycine" evidence="2">
    <location>
        <position position="2"/>
    </location>
</feature>
<name>LUL4_ARATH</name>
<proteinExistence type="evidence at transcript level"/>
<protein>
    <recommendedName>
        <fullName>Probable E3 ubiquitin-protein ligase LUL4</fullName>
        <ecNumber>2.3.2.27</ecNumber>
    </recommendedName>
    <alternativeName>
        <fullName evidence="6">Probable RING-type E3 ubiquitin transferase LUL4</fullName>
    </alternativeName>
    <alternativeName>
        <fullName>Protein LOG2-LIKE UBIQUITIN LIGASE 4</fullName>
    </alternativeName>
    <alternativeName>
        <fullName>RING finger protein 208</fullName>
    </alternativeName>
</protein>